<protein>
    <recommendedName>
        <fullName evidence="1">NADH-quinone oxidoreductase subunit H</fullName>
        <ecNumber evidence="1">7.1.1.-</ecNumber>
    </recommendedName>
    <alternativeName>
        <fullName evidence="1">NADH dehydrogenase I subunit H</fullName>
    </alternativeName>
    <alternativeName>
        <fullName evidence="1">NDH-1 subunit H</fullName>
    </alternativeName>
</protein>
<accession>A8FNN0</accession>
<evidence type="ECO:0000255" key="1">
    <source>
        <dbReference type="HAMAP-Rule" id="MF_01350"/>
    </source>
</evidence>
<gene>
    <name evidence="1" type="primary">nuoH</name>
    <name type="ordered locus">C8J_1469</name>
</gene>
<organism>
    <name type="scientific">Campylobacter jejuni subsp. jejuni serotype O:6 (strain 81116 / NCTC 11828)</name>
    <dbReference type="NCBI Taxonomy" id="407148"/>
    <lineage>
        <taxon>Bacteria</taxon>
        <taxon>Pseudomonadati</taxon>
        <taxon>Campylobacterota</taxon>
        <taxon>Epsilonproteobacteria</taxon>
        <taxon>Campylobacterales</taxon>
        <taxon>Campylobacteraceae</taxon>
        <taxon>Campylobacter</taxon>
    </lineage>
</organism>
<proteinExistence type="inferred from homology"/>
<dbReference type="EC" id="7.1.1.-" evidence="1"/>
<dbReference type="EMBL" id="CP000814">
    <property type="protein sequence ID" value="ABV53067.1"/>
    <property type="molecule type" value="Genomic_DNA"/>
</dbReference>
<dbReference type="RefSeq" id="WP_002866861.1">
    <property type="nucleotide sequence ID" value="NC_009839.1"/>
</dbReference>
<dbReference type="SMR" id="A8FNN0"/>
<dbReference type="KEGG" id="cju:C8J_1469"/>
<dbReference type="HOGENOM" id="CLU_015134_0_1_7"/>
<dbReference type="GO" id="GO:0005886">
    <property type="term" value="C:plasma membrane"/>
    <property type="evidence" value="ECO:0007669"/>
    <property type="project" value="UniProtKB-SubCell"/>
</dbReference>
<dbReference type="GO" id="GO:0003954">
    <property type="term" value="F:NADH dehydrogenase activity"/>
    <property type="evidence" value="ECO:0007669"/>
    <property type="project" value="TreeGrafter"/>
</dbReference>
<dbReference type="GO" id="GO:0016655">
    <property type="term" value="F:oxidoreductase activity, acting on NAD(P)H, quinone or similar compound as acceptor"/>
    <property type="evidence" value="ECO:0007669"/>
    <property type="project" value="UniProtKB-UniRule"/>
</dbReference>
<dbReference type="GO" id="GO:0048038">
    <property type="term" value="F:quinone binding"/>
    <property type="evidence" value="ECO:0007669"/>
    <property type="project" value="UniProtKB-KW"/>
</dbReference>
<dbReference type="GO" id="GO:0009060">
    <property type="term" value="P:aerobic respiration"/>
    <property type="evidence" value="ECO:0007669"/>
    <property type="project" value="TreeGrafter"/>
</dbReference>
<dbReference type="HAMAP" id="MF_01350">
    <property type="entry name" value="NDH1_NuoH"/>
    <property type="match status" value="1"/>
</dbReference>
<dbReference type="InterPro" id="IPR001694">
    <property type="entry name" value="NADH_UbQ_OxRdtase_su1/FPO"/>
</dbReference>
<dbReference type="InterPro" id="IPR018086">
    <property type="entry name" value="NADH_UbQ_OxRdtase_su1_CS"/>
</dbReference>
<dbReference type="NCBIfam" id="NF004741">
    <property type="entry name" value="PRK06076.1-2"/>
    <property type="match status" value="1"/>
</dbReference>
<dbReference type="PANTHER" id="PTHR11432">
    <property type="entry name" value="NADH DEHYDROGENASE SUBUNIT 1"/>
    <property type="match status" value="1"/>
</dbReference>
<dbReference type="PANTHER" id="PTHR11432:SF3">
    <property type="entry name" value="NADH-UBIQUINONE OXIDOREDUCTASE CHAIN 1"/>
    <property type="match status" value="1"/>
</dbReference>
<dbReference type="Pfam" id="PF00146">
    <property type="entry name" value="NADHdh"/>
    <property type="match status" value="1"/>
</dbReference>
<dbReference type="PROSITE" id="PS00667">
    <property type="entry name" value="COMPLEX1_ND1_1"/>
    <property type="match status" value="1"/>
</dbReference>
<keyword id="KW-0997">Cell inner membrane</keyword>
<keyword id="KW-1003">Cell membrane</keyword>
<keyword id="KW-0472">Membrane</keyword>
<keyword id="KW-0520">NAD</keyword>
<keyword id="KW-0874">Quinone</keyword>
<keyword id="KW-1278">Translocase</keyword>
<keyword id="KW-0812">Transmembrane</keyword>
<keyword id="KW-1133">Transmembrane helix</keyword>
<keyword id="KW-0830">Ubiquinone</keyword>
<name>NUOH_CAMJ8</name>
<comment type="function">
    <text evidence="1">NDH-1 shuttles electrons from NADH, via FMN and iron-sulfur (Fe-S) centers, to quinones in the respiratory chain. The immediate electron acceptor for the enzyme in this species is believed to be ubiquinone. Couples the redox reaction to proton translocation (for every two electrons transferred, four hydrogen ions are translocated across the cytoplasmic membrane), and thus conserves the redox energy in a proton gradient. This subunit may bind ubiquinone.</text>
</comment>
<comment type="catalytic activity">
    <reaction evidence="1">
        <text>a quinone + NADH + 5 H(+)(in) = a quinol + NAD(+) + 4 H(+)(out)</text>
        <dbReference type="Rhea" id="RHEA:57888"/>
        <dbReference type="ChEBI" id="CHEBI:15378"/>
        <dbReference type="ChEBI" id="CHEBI:24646"/>
        <dbReference type="ChEBI" id="CHEBI:57540"/>
        <dbReference type="ChEBI" id="CHEBI:57945"/>
        <dbReference type="ChEBI" id="CHEBI:132124"/>
    </reaction>
</comment>
<comment type="subunit">
    <text evidence="1">NDH-1 is composed of 14 different subunits. Subunits NuoA, H, J, K, L, M, N constitute the membrane sector of the complex.</text>
</comment>
<comment type="subcellular location">
    <subcellularLocation>
        <location evidence="1">Cell inner membrane</location>
        <topology evidence="1">Multi-pass membrane protein</topology>
    </subcellularLocation>
</comment>
<comment type="similarity">
    <text evidence="1">Belongs to the complex I subunit 1 family.</text>
</comment>
<sequence>MSDFAFFALEALIKCIIIIAIFASLAGLATYAERKVLAYFQRRIGPDMVGPFGLIQLVADMIKLFTKEDIIPSNSQKFIFAIAPLISAICAFVSLAAIPMLPEFTLFGRVIQPIVADINVALLFVIGTSGLCFYAVFLGGLASNNKWSILGAARGLVAIISYESVGALALIAIVMLVGSFSLVDINNYQSDGFFSWLIFKQPLAFVLFIIALFIETNRTPLCLTENDAEIVAGYGTEYSGLRWGMFFIGEYASMIAGAILVTLLFLGGFNSFWIIPGWIMMIVKSSFIFFWYFWARAAFPQLRPDQVMKMCYLILIPLAVLNLLITALAVLL</sequence>
<feature type="chain" id="PRO_1000073373" description="NADH-quinone oxidoreductase subunit H">
    <location>
        <begin position="1"/>
        <end position="332"/>
    </location>
</feature>
<feature type="transmembrane region" description="Helical" evidence="1">
    <location>
        <begin position="4"/>
        <end position="24"/>
    </location>
</feature>
<feature type="transmembrane region" description="Helical" evidence="1">
    <location>
        <begin position="44"/>
        <end position="64"/>
    </location>
</feature>
<feature type="transmembrane region" description="Helical" evidence="1">
    <location>
        <begin position="78"/>
        <end position="98"/>
    </location>
</feature>
<feature type="transmembrane region" description="Helical" evidence="1">
    <location>
        <begin position="120"/>
        <end position="140"/>
    </location>
</feature>
<feature type="transmembrane region" description="Helical" evidence="1">
    <location>
        <begin position="165"/>
        <end position="185"/>
    </location>
</feature>
<feature type="transmembrane region" description="Helical" evidence="1">
    <location>
        <begin position="194"/>
        <end position="214"/>
    </location>
</feature>
<feature type="transmembrane region" description="Helical" evidence="1">
    <location>
        <begin position="255"/>
        <end position="275"/>
    </location>
</feature>
<feature type="transmembrane region" description="Helical" evidence="1">
    <location>
        <begin position="279"/>
        <end position="299"/>
    </location>
</feature>
<feature type="transmembrane region" description="Helical" evidence="1">
    <location>
        <begin position="312"/>
        <end position="332"/>
    </location>
</feature>
<reference key="1">
    <citation type="journal article" date="2007" name="J. Bacteriol.">
        <title>The complete genome sequence of Campylobacter jejuni strain 81116 (NCTC11828).</title>
        <authorList>
            <person name="Pearson B.M."/>
            <person name="Gaskin D.J.H."/>
            <person name="Segers R.P.A.M."/>
            <person name="Wells J.M."/>
            <person name="Nuijten P.J.M."/>
            <person name="van Vliet A.H.M."/>
        </authorList>
    </citation>
    <scope>NUCLEOTIDE SEQUENCE [LARGE SCALE GENOMIC DNA]</scope>
    <source>
        <strain>81116 / NCTC 11828</strain>
    </source>
</reference>